<evidence type="ECO:0000255" key="1"/>
<evidence type="ECO:0000255" key="2">
    <source>
        <dbReference type="PROSITE-ProRule" id="PRU00723"/>
    </source>
</evidence>
<evidence type="ECO:0000256" key="3">
    <source>
        <dbReference type="SAM" id="MobiDB-lite"/>
    </source>
</evidence>
<evidence type="ECO:0000269" key="4">
    <source>
    </source>
</evidence>
<evidence type="ECO:0000305" key="5"/>
<comment type="function">
    <text evidence="4">Possesses RNA-binding and ribonuclease activities in vitro.</text>
</comment>
<comment type="sequence caution" evidence="5">
    <conflict type="miscellaneous discrepancy">
        <sequence resource="EMBL" id="BX832581"/>
    </conflict>
    <text>Sequencing errors.</text>
</comment>
<keyword id="KW-0175">Coiled coil</keyword>
<keyword id="KW-0238">DNA-binding</keyword>
<keyword id="KW-0378">Hydrolase</keyword>
<keyword id="KW-0479">Metal-binding</keyword>
<keyword id="KW-0540">Nuclease</keyword>
<keyword id="KW-1185">Reference proteome</keyword>
<keyword id="KW-0677">Repeat</keyword>
<keyword id="KW-0694">RNA-binding</keyword>
<keyword id="KW-0862">Zinc</keyword>
<keyword id="KW-0863">Zinc-finger</keyword>
<organism>
    <name type="scientific">Arabidopsis thaliana</name>
    <name type="common">Mouse-ear cress</name>
    <dbReference type="NCBI Taxonomy" id="3702"/>
    <lineage>
        <taxon>Eukaryota</taxon>
        <taxon>Viridiplantae</taxon>
        <taxon>Streptophyta</taxon>
        <taxon>Embryophyta</taxon>
        <taxon>Tracheophyta</taxon>
        <taxon>Spermatophyta</taxon>
        <taxon>Magnoliopsida</taxon>
        <taxon>eudicotyledons</taxon>
        <taxon>Gunneridae</taxon>
        <taxon>Pentapetalae</taxon>
        <taxon>rosids</taxon>
        <taxon>malvids</taxon>
        <taxon>Brassicales</taxon>
        <taxon>Brassicaceae</taxon>
        <taxon>Camelineae</taxon>
        <taxon>Arabidopsis</taxon>
    </lineage>
</organism>
<proteinExistence type="evidence at transcript level"/>
<name>C3H65_ARATH</name>
<reference key="1">
    <citation type="journal article" date="2000" name="DNA Res.">
        <title>Structural analysis of Arabidopsis thaliana chromosome 5. X. Sequence features of the regions of 3,076,755 bp covered by sixty P1 and TAC clones.</title>
        <authorList>
            <person name="Sato S."/>
            <person name="Nakamura Y."/>
            <person name="Kaneko T."/>
            <person name="Katoh T."/>
            <person name="Asamizu E."/>
            <person name="Kotani H."/>
            <person name="Tabata S."/>
        </authorList>
    </citation>
    <scope>NUCLEOTIDE SEQUENCE [LARGE SCALE GENOMIC DNA]</scope>
    <source>
        <strain>cv. Columbia</strain>
    </source>
</reference>
<reference key="2">
    <citation type="journal article" date="2017" name="Plant J.">
        <title>Araport11: a complete reannotation of the Arabidopsis thaliana reference genome.</title>
        <authorList>
            <person name="Cheng C.Y."/>
            <person name="Krishnakumar V."/>
            <person name="Chan A.P."/>
            <person name="Thibaud-Nissen F."/>
            <person name="Schobel S."/>
            <person name="Town C.D."/>
        </authorList>
    </citation>
    <scope>GENOME REANNOTATION</scope>
    <source>
        <strain>cv. Columbia</strain>
    </source>
</reference>
<reference key="3">
    <citation type="journal article" date="2004" name="Genome Res.">
        <title>Whole genome sequence comparisons and 'full-length' cDNA sequences: a combined approach to evaluate and improve Arabidopsis genome annotation.</title>
        <authorList>
            <person name="Castelli V."/>
            <person name="Aury J.-M."/>
            <person name="Jaillon O."/>
            <person name="Wincker P."/>
            <person name="Clepet C."/>
            <person name="Menard M."/>
            <person name="Cruaud C."/>
            <person name="Quetier F."/>
            <person name="Scarpelli C."/>
            <person name="Schaechter V."/>
            <person name="Temple G."/>
            <person name="Caboche M."/>
            <person name="Weissenbach J."/>
            <person name="Salanoubat M."/>
        </authorList>
    </citation>
    <scope>NUCLEOTIDE SEQUENCE [LARGE SCALE MRNA]</scope>
    <source>
        <strain>cv. Columbia</strain>
    </source>
</reference>
<reference key="4">
    <citation type="journal article" date="2008" name="BMC Genomics">
        <title>Genome-wide analysis of CCCH zinc finger family in Arabidopsis and rice.</title>
        <authorList>
            <person name="Wang D."/>
            <person name="Guo Y."/>
            <person name="Wu C."/>
            <person name="Yang G."/>
            <person name="Li Y."/>
            <person name="Zheng C."/>
        </authorList>
    </citation>
    <scope>NOMENCLATURE</scope>
</reference>
<reference key="5">
    <citation type="journal article" date="2008" name="FEBS Lett.">
        <title>Ribonuclease activity is a common property of Arabidopsis CCCH-containing zinc-finger proteins.</title>
        <authorList>
            <person name="Addepalli B."/>
            <person name="Hunt A.G."/>
        </authorList>
    </citation>
    <scope>FUNCTION</scope>
</reference>
<protein>
    <recommendedName>
        <fullName>Zinc finger CCCH domain-containing protein 65</fullName>
        <shortName>AtC3H65</shortName>
        <ecNumber>3.1.-.-</ecNumber>
    </recommendedName>
    <alternativeName>
        <fullName>Protein EMBRYO DEFECTIVE 1789</fullName>
    </alternativeName>
</protein>
<dbReference type="EC" id="3.1.-.-"/>
<dbReference type="EMBL" id="AB024035">
    <property type="protein sequence ID" value="BAA97023.1"/>
    <property type="molecule type" value="Genomic_DNA"/>
</dbReference>
<dbReference type="EMBL" id="CP002688">
    <property type="protein sequence ID" value="AED96824.1"/>
    <property type="molecule type" value="Genomic_DNA"/>
</dbReference>
<dbReference type="EMBL" id="BX832581">
    <property type="status" value="NOT_ANNOTATED_CDS"/>
    <property type="molecule type" value="mRNA"/>
</dbReference>
<dbReference type="RefSeq" id="NP_200503.1">
    <property type="nucleotide sequence ID" value="NM_125075.3"/>
</dbReference>
<dbReference type="FunCoup" id="Q9LTS7">
    <property type="interactions" value="652"/>
</dbReference>
<dbReference type="STRING" id="3702.Q9LTS7"/>
<dbReference type="PaxDb" id="3702-AT5G56930.1"/>
<dbReference type="EnsemblPlants" id="AT5G56930.1">
    <property type="protein sequence ID" value="AT5G56930.1"/>
    <property type="gene ID" value="AT5G56930"/>
</dbReference>
<dbReference type="GeneID" id="835795"/>
<dbReference type="Gramene" id="AT5G56930.1">
    <property type="protein sequence ID" value="AT5G56930.1"/>
    <property type="gene ID" value="AT5G56930"/>
</dbReference>
<dbReference type="KEGG" id="ath:AT5G56930"/>
<dbReference type="Araport" id="AT5G56930"/>
<dbReference type="TAIR" id="AT5G56930">
    <property type="gene designation" value="EMB1789"/>
</dbReference>
<dbReference type="eggNOG" id="KOG1040">
    <property type="taxonomic scope" value="Eukaryota"/>
</dbReference>
<dbReference type="HOGENOM" id="CLU_436393_0_0_1"/>
<dbReference type="InParanoid" id="Q9LTS7"/>
<dbReference type="OMA" id="TEIACEP"/>
<dbReference type="OrthoDB" id="411372at2759"/>
<dbReference type="PhylomeDB" id="Q9LTS7"/>
<dbReference type="PRO" id="PR:Q9LTS7"/>
<dbReference type="Proteomes" id="UP000006548">
    <property type="component" value="Chromosome 5"/>
</dbReference>
<dbReference type="ExpressionAtlas" id="Q9LTS7">
    <property type="expression patterns" value="baseline and differential"/>
</dbReference>
<dbReference type="GO" id="GO:0003677">
    <property type="term" value="F:DNA binding"/>
    <property type="evidence" value="ECO:0007669"/>
    <property type="project" value="UniProtKB-KW"/>
</dbReference>
<dbReference type="GO" id="GO:0004518">
    <property type="term" value="F:nuclease activity"/>
    <property type="evidence" value="ECO:0007669"/>
    <property type="project" value="UniProtKB-KW"/>
</dbReference>
<dbReference type="GO" id="GO:0003723">
    <property type="term" value="F:RNA binding"/>
    <property type="evidence" value="ECO:0007669"/>
    <property type="project" value="UniProtKB-KW"/>
</dbReference>
<dbReference type="GO" id="GO:0008270">
    <property type="term" value="F:zinc ion binding"/>
    <property type="evidence" value="ECO:0007669"/>
    <property type="project" value="UniProtKB-KW"/>
</dbReference>
<dbReference type="GO" id="GO:0045892">
    <property type="term" value="P:negative regulation of DNA-templated transcription"/>
    <property type="evidence" value="ECO:0007669"/>
    <property type="project" value="InterPro"/>
</dbReference>
<dbReference type="FunFam" id="2.30.30.1190:FF:000010">
    <property type="entry name" value="C3H-type transcription factor"/>
    <property type="match status" value="1"/>
</dbReference>
<dbReference type="Gene3D" id="2.30.30.1190">
    <property type="match status" value="1"/>
</dbReference>
<dbReference type="Gene3D" id="4.10.1000.10">
    <property type="entry name" value="Zinc finger, CCCH-type"/>
    <property type="match status" value="1"/>
</dbReference>
<dbReference type="InterPro" id="IPR045124">
    <property type="entry name" value="Su(sable)-like"/>
</dbReference>
<dbReference type="InterPro" id="IPR000571">
    <property type="entry name" value="Znf_CCCH"/>
</dbReference>
<dbReference type="InterPro" id="IPR036855">
    <property type="entry name" value="Znf_CCCH_sf"/>
</dbReference>
<dbReference type="PANTHER" id="PTHR13119:SF12">
    <property type="entry name" value="PROTEIN SUPPRESSOR OF SABLE"/>
    <property type="match status" value="1"/>
</dbReference>
<dbReference type="PANTHER" id="PTHR13119">
    <property type="entry name" value="ZINC FINGER CCCH DOMAIN-CONTAINING PROTEI"/>
    <property type="match status" value="1"/>
</dbReference>
<dbReference type="SMART" id="SM00356">
    <property type="entry name" value="ZnF_C3H1"/>
    <property type="match status" value="3"/>
</dbReference>
<dbReference type="SUPFAM" id="SSF90229">
    <property type="entry name" value="CCCH zinc finger"/>
    <property type="match status" value="2"/>
</dbReference>
<dbReference type="PROSITE" id="PS50103">
    <property type="entry name" value="ZF_C3H1"/>
    <property type="match status" value="3"/>
</dbReference>
<feature type="chain" id="PRO_0000372015" description="Zinc finger CCCH domain-containing protein 65">
    <location>
        <begin position="1"/>
        <end position="675"/>
    </location>
</feature>
<feature type="zinc finger region" description="C3H1-type 1" evidence="2">
    <location>
        <begin position="350"/>
        <end position="377"/>
    </location>
</feature>
<feature type="zinc finger region" description="C3H1-type 2" evidence="2">
    <location>
        <begin position="384"/>
        <end position="406"/>
    </location>
</feature>
<feature type="zinc finger region" description="C3H1-type 3" evidence="2">
    <location>
        <begin position="409"/>
        <end position="432"/>
    </location>
</feature>
<feature type="region of interest" description="Disordered" evidence="3">
    <location>
        <begin position="294"/>
        <end position="320"/>
    </location>
</feature>
<feature type="region of interest" description="Disordered" evidence="3">
    <location>
        <begin position="487"/>
        <end position="572"/>
    </location>
</feature>
<feature type="region of interest" description="Disordered" evidence="3">
    <location>
        <begin position="586"/>
        <end position="612"/>
    </location>
</feature>
<feature type="coiled-coil region" evidence="1">
    <location>
        <begin position="314"/>
        <end position="342"/>
    </location>
</feature>
<feature type="compositionally biased region" description="Basic residues" evidence="3">
    <location>
        <begin position="307"/>
        <end position="320"/>
    </location>
</feature>
<feature type="compositionally biased region" description="Low complexity" evidence="3">
    <location>
        <begin position="490"/>
        <end position="504"/>
    </location>
</feature>
<feature type="compositionally biased region" description="Polar residues" evidence="3">
    <location>
        <begin position="543"/>
        <end position="567"/>
    </location>
</feature>
<feature type="compositionally biased region" description="Basic and acidic residues" evidence="3">
    <location>
        <begin position="586"/>
        <end position="595"/>
    </location>
</feature>
<feature type="compositionally biased region" description="Polar residues" evidence="3">
    <location>
        <begin position="597"/>
        <end position="612"/>
    </location>
</feature>
<gene>
    <name type="primary">EMB1789</name>
    <name type="ordered locus">At5g56930</name>
    <name type="ORF">MHM17.4</name>
</gene>
<accession>Q9LTS7</accession>
<sequence length="675" mass="73844">MESSVAPFPHRRTHLPNRNYRSLLYHFCSSFDREPQISLATPAVLQELVLRTEIAQESPGETCEPPENLSITESKLNGVSGDSSGEKVETISQEKSLMLGDICDGIDLQDASVVSRHTDFFDSFELMINETQDSVPESCVNLFEALDVNDYDIVQNVLEKPNIATQVQVDPVESEKKAEEVPKSVESNEVISSGVLEACNGTVQREMELEKPVDNSPVLVDSVSRIVGGDDVEEGEISGDDNDDMLVEDDETVERHEEYQVSQDGTGNSHLTSHKSFGVEVMNVDNQAKKIDQTFSNEAKMDPGTSIKKRSAPSKDAKARKRAKARIKRAQERIALGVKKLKLKPVAPKPKPIKYCRHYLKGRCHEGDKCKFSHDTIPETKCSPCCYFATQSCMKGDDCPFDHDLSKYPCNNFITKGFCYRGDSCLFSHKGTPQSASDTPSANVTVSSTKITAASFSPQKTKKQSVRDAIAKLPAIQARVSSSVAFLKPSSHSNQRNSSDASSSKINEHVTPPQVPPLRKPSVAPKGMSFLSLDKTSQEDTVKASSASKPNTDNSDSQTLKQSQQGSFLPLGPPKGISFLSFASEEQKTLNREPQKPASSKNLKTTPSSHIQSSLLSAMKLAAEFESAKVERGNNDPTEAVNKSNVTVDTAVTRNSGNISSKILEFLSSFSHGKN</sequence>